<protein>
    <recommendedName>
        <fullName evidence="15">Cell division control protein 11</fullName>
    </recommendedName>
</protein>
<evidence type="ECO:0000250" key="1">
    <source>
        <dbReference type="UniProtKB" id="Q9UH03"/>
    </source>
</evidence>
<evidence type="ECO:0000255" key="2"/>
<evidence type="ECO:0000255" key="3">
    <source>
        <dbReference type="PROSITE-ProRule" id="PRU01056"/>
    </source>
</evidence>
<evidence type="ECO:0000256" key="4">
    <source>
        <dbReference type="SAM" id="MobiDB-lite"/>
    </source>
</evidence>
<evidence type="ECO:0000269" key="5">
    <source>
    </source>
</evidence>
<evidence type="ECO:0000269" key="6">
    <source>
    </source>
</evidence>
<evidence type="ECO:0000269" key="7">
    <source>
    </source>
</evidence>
<evidence type="ECO:0000269" key="8">
    <source>
    </source>
</evidence>
<evidence type="ECO:0000269" key="9">
    <source>
    </source>
</evidence>
<evidence type="ECO:0000269" key="10">
    <source>
    </source>
</evidence>
<evidence type="ECO:0000269" key="11">
    <source>
    </source>
</evidence>
<evidence type="ECO:0000269" key="12">
    <source>
    </source>
</evidence>
<evidence type="ECO:0000269" key="13">
    <source>
    </source>
</evidence>
<evidence type="ECO:0000269" key="14">
    <source>
    </source>
</evidence>
<evidence type="ECO:0000303" key="15">
    <source>
    </source>
</evidence>
<evidence type="ECO:0007744" key="16">
    <source>
        <dbReference type="PDB" id="5AR1"/>
    </source>
</evidence>
<evidence type="ECO:0007744" key="17">
    <source>
    </source>
</evidence>
<evidence type="ECO:0007744" key="18">
    <source>
    </source>
</evidence>
<evidence type="ECO:0007744" key="19">
    <source>
    </source>
</evidence>
<evidence type="ECO:0007744" key="20">
    <source>
    </source>
</evidence>
<evidence type="ECO:0007829" key="21">
    <source>
        <dbReference type="PDB" id="5AR1"/>
    </source>
</evidence>
<keyword id="KW-0002">3D-structure</keyword>
<keyword id="KW-0007">Acetylation</keyword>
<keyword id="KW-0131">Cell cycle</keyword>
<keyword id="KW-0132">Cell division</keyword>
<keyword id="KW-0175">Coiled coil</keyword>
<keyword id="KW-0342">GTP-binding</keyword>
<keyword id="KW-1017">Isopeptide bond</keyword>
<keyword id="KW-0472">Membrane</keyword>
<keyword id="KW-0547">Nucleotide-binding</keyword>
<keyword id="KW-0597">Phosphoprotein</keyword>
<keyword id="KW-1185">Reference proteome</keyword>
<keyword id="KW-0832">Ubl conjugation</keyword>
<feature type="initiator methionine" description="Removed" evidence="17 20">
    <location>
        <position position="1"/>
    </location>
</feature>
<feature type="chain" id="PRO_0000173499" description="Cell division control protein 11">
    <location>
        <begin position="2"/>
        <end position="415"/>
    </location>
</feature>
<feature type="domain" description="Septin-type G" evidence="3">
    <location>
        <begin position="19"/>
        <end position="298"/>
    </location>
</feature>
<feature type="region of interest" description="G1 motif" evidence="3">
    <location>
        <begin position="29"/>
        <end position="36"/>
    </location>
</feature>
<feature type="region of interest" description="G3 motif" evidence="3">
    <location>
        <begin position="89"/>
        <end position="92"/>
    </location>
</feature>
<feature type="region of interest" description="G4 motif" evidence="3">
    <location>
        <begin position="171"/>
        <end position="174"/>
    </location>
</feature>
<feature type="region of interest" description="Disordered" evidence="4">
    <location>
        <begin position="307"/>
        <end position="360"/>
    </location>
</feature>
<feature type="coiled-coil region" evidence="2">
    <location>
        <begin position="354"/>
        <end position="414"/>
    </location>
</feature>
<feature type="short sequence motif" description="Basic motif">
    <location>
        <begin position="12"/>
        <end position="19"/>
    </location>
</feature>
<feature type="compositionally biased region" description="Low complexity" evidence="4">
    <location>
        <begin position="316"/>
        <end position="328"/>
    </location>
</feature>
<feature type="compositionally biased region" description="Polar residues" evidence="4">
    <location>
        <begin position="329"/>
        <end position="340"/>
    </location>
</feature>
<feature type="compositionally biased region" description="Polar residues" evidence="4">
    <location>
        <begin position="348"/>
        <end position="359"/>
    </location>
</feature>
<feature type="binding site" evidence="1">
    <location>
        <begin position="29"/>
        <end position="36"/>
    </location>
    <ligand>
        <name>GTP</name>
        <dbReference type="ChEBI" id="CHEBI:37565"/>
    </ligand>
</feature>
<feature type="binding site" evidence="1">
    <location>
        <position position="92"/>
    </location>
    <ligand>
        <name>GTP</name>
        <dbReference type="ChEBI" id="CHEBI:37565"/>
    </ligand>
</feature>
<feature type="binding site" evidence="1">
    <location>
        <begin position="172"/>
        <end position="180"/>
    </location>
    <ligand>
        <name>GTP</name>
        <dbReference type="ChEBI" id="CHEBI:37565"/>
    </ligand>
</feature>
<feature type="binding site" evidence="1">
    <location>
        <position position="230"/>
    </location>
    <ligand>
        <name>GTP</name>
        <dbReference type="ChEBI" id="CHEBI:37565"/>
    </ligand>
</feature>
<feature type="binding site" evidence="1">
    <location>
        <position position="247"/>
    </location>
    <ligand>
        <name>GTP</name>
        <dbReference type="ChEBI" id="CHEBI:37565"/>
    </ligand>
</feature>
<feature type="modified residue" description="N-acetylserine" evidence="17 20">
    <location>
        <position position="2"/>
    </location>
</feature>
<feature type="modified residue" description="Phosphoserine" evidence="17">
    <location>
        <position position="2"/>
    </location>
</feature>
<feature type="modified residue" description="Phosphoserine" evidence="19">
    <location>
        <position position="305"/>
    </location>
</feature>
<feature type="modified residue" description="Phosphothreonine" evidence="18 19">
    <location>
        <position position="327"/>
    </location>
</feature>
<feature type="cross-link" description="Glycyl lysine isopeptide (Lys-Gly) (interchain with G-Cter in SUMO)">
    <location>
        <position position="412"/>
    </location>
</feature>
<feature type="mutagenesis site" description="Loss of function; abolishes association with PI(4)P and PI(5)P." evidence="8">
    <original>RKRKH</original>
    <variation>QQEQQ</variation>
    <location>
        <begin position="12"/>
        <end position="16"/>
    </location>
</feature>
<feature type="mutagenesis site" description="Loss of function; strongly decreases association with PI(4)P and PI(5)P." evidence="8">
    <original>RKRKH</original>
    <variation>QQQQQ</variation>
    <location>
        <begin position="12"/>
        <end position="16"/>
    </location>
</feature>
<feature type="mutagenesis site" description="Abolishes GTP-binding; no strong effect in vivo." evidence="8">
    <original>G</original>
    <variation>A</variation>
    <location>
        <position position="29"/>
    </location>
</feature>
<feature type="mutagenesis site" description="Abolishes GTP-binding; no strong effect in vivo." evidence="8">
    <original>G</original>
    <variation>A</variation>
    <location>
        <position position="32"/>
    </location>
</feature>
<feature type="mutagenesis site" description="Abolishes GTP-binding; no strong effect in vivo." evidence="8">
    <original>G</original>
    <variation>A</variation>
    <location>
        <position position="34"/>
    </location>
</feature>
<feature type="mutagenesis site" description="Abolishes GTP-binding; no strong effect in vivo." evidence="8">
    <original>R</original>
    <variation>A</variation>
    <location>
        <position position="35"/>
    </location>
</feature>
<feature type="mutagenesis site" description="Temperature-sensitive; no effect at 23 degrees Celsius but loss of function at 37 degrees Celsius; abolishes interaction with itself." evidence="8">
    <original>N</original>
    <variation>E</variation>
    <location>
        <position position="40"/>
    </location>
</feature>
<feature type="mutagenesis site" description="Temperature-sensitive; no effect at 23 degrees Celsius but loss of function at 37 degrees Celsius." evidence="8">
    <original>G</original>
    <variation>E</variation>
    <location>
        <position position="230"/>
    </location>
</feature>
<feature type="mutagenesis site" description="Abolishes sumoylation in vitro." evidence="5">
    <original>K</original>
    <variation>R</variation>
    <location>
        <position position="412"/>
    </location>
</feature>
<feature type="strand" evidence="21">
    <location>
        <begin position="23"/>
        <end position="29"/>
    </location>
</feature>
<feature type="strand" evidence="21">
    <location>
        <begin position="31"/>
        <end position="33"/>
    </location>
</feature>
<feature type="turn" evidence="21">
    <location>
        <begin position="36"/>
        <end position="40"/>
    </location>
</feature>
<feature type="strand" evidence="21">
    <location>
        <begin position="69"/>
        <end position="73"/>
    </location>
</feature>
<feature type="strand" evidence="21">
    <location>
        <begin position="79"/>
        <end position="81"/>
    </location>
</feature>
<feature type="strand" evidence="21">
    <location>
        <begin position="85"/>
        <end position="89"/>
    </location>
</feature>
<feature type="helix" evidence="21">
    <location>
        <begin position="104"/>
        <end position="120"/>
    </location>
</feature>
<feature type="strand" evidence="21">
    <location>
        <begin position="137"/>
        <end position="142"/>
    </location>
</feature>
<feature type="strand" evidence="21">
    <location>
        <begin position="145"/>
        <end position="148"/>
    </location>
</feature>
<feature type="helix" evidence="21">
    <location>
        <begin position="151"/>
        <end position="160"/>
    </location>
</feature>
<feature type="turn" evidence="21">
    <location>
        <begin position="161"/>
        <end position="163"/>
    </location>
</feature>
<feature type="strand" evidence="21">
    <location>
        <begin position="166"/>
        <end position="172"/>
    </location>
</feature>
<feature type="helix" evidence="21">
    <location>
        <begin position="173"/>
        <end position="175"/>
    </location>
</feature>
<feature type="helix" evidence="21">
    <location>
        <begin position="178"/>
        <end position="194"/>
    </location>
</feature>
<feature type="strand" evidence="21">
    <location>
        <begin position="206"/>
        <end position="209"/>
    </location>
</feature>
<feature type="helix" evidence="21">
    <location>
        <begin position="213"/>
        <end position="223"/>
    </location>
</feature>
<feature type="strand" evidence="21">
    <location>
        <begin position="230"/>
        <end position="232"/>
    </location>
</feature>
<feature type="strand" evidence="21">
    <location>
        <begin position="263"/>
        <end position="265"/>
    </location>
</feature>
<feature type="helix" evidence="21">
    <location>
        <begin position="269"/>
        <end position="285"/>
    </location>
</feature>
<feature type="helix" evidence="21">
    <location>
        <begin position="287"/>
        <end position="295"/>
    </location>
</feature>
<organism>
    <name type="scientific">Saccharomyces cerevisiae (strain ATCC 204508 / S288c)</name>
    <name type="common">Baker's yeast</name>
    <dbReference type="NCBI Taxonomy" id="559292"/>
    <lineage>
        <taxon>Eukaryota</taxon>
        <taxon>Fungi</taxon>
        <taxon>Dikarya</taxon>
        <taxon>Ascomycota</taxon>
        <taxon>Saccharomycotina</taxon>
        <taxon>Saccharomycetes</taxon>
        <taxon>Saccharomycetales</taxon>
        <taxon>Saccharomycetaceae</taxon>
        <taxon>Saccharomyces</taxon>
    </lineage>
</organism>
<reference key="1">
    <citation type="journal article" date="1996" name="Curr. Opin. Cell Biol.">
        <title>The septins: roles in cytokinesis and other processes.</title>
        <authorList>
            <person name="Longtine M.S."/>
            <person name="DeMarini D.J."/>
            <person name="Valencik M.L."/>
            <person name="Al-Awar O.S."/>
            <person name="Fares H."/>
            <person name="De Virgilio C."/>
            <person name="Pringle J.R."/>
        </authorList>
    </citation>
    <scope>NUCLEOTIDE SEQUENCE [GENOMIC DNA]</scope>
    <source>
        <strain>DBY939</strain>
    </source>
</reference>
<reference key="2">
    <citation type="journal article" date="1996" name="Yeast">
        <title>Analysis of a 62 kb DNA sequence of chromosome X reveals 36 open reading frames and a gene cluster with a counterpart on chromosome XI.</title>
        <authorList>
            <person name="Huang M.-E."/>
            <person name="Manus V."/>
            <person name="Chuat J.-C."/>
            <person name="Galibert F."/>
        </authorList>
    </citation>
    <scope>NUCLEOTIDE SEQUENCE [GENOMIC DNA]</scope>
    <source>
        <strain>ATCC 204508 / S288c</strain>
    </source>
</reference>
<reference key="3">
    <citation type="journal article" date="1996" name="EMBO J.">
        <title>Complete nucleotide sequence of Saccharomyces cerevisiae chromosome X.</title>
        <authorList>
            <person name="Galibert F."/>
            <person name="Alexandraki D."/>
            <person name="Baur A."/>
            <person name="Boles E."/>
            <person name="Chalwatzis N."/>
            <person name="Chuat J.-C."/>
            <person name="Coster F."/>
            <person name="Cziepluch C."/>
            <person name="de Haan M."/>
            <person name="Domdey H."/>
            <person name="Durand P."/>
            <person name="Entian K.-D."/>
            <person name="Gatius M."/>
            <person name="Goffeau A."/>
            <person name="Grivell L.A."/>
            <person name="Hennemann A."/>
            <person name="Herbert C.J."/>
            <person name="Heumann K."/>
            <person name="Hilger F."/>
            <person name="Hollenberg C.P."/>
            <person name="Huang M.-E."/>
            <person name="Jacq C."/>
            <person name="Jauniaux J.-C."/>
            <person name="Katsoulou C."/>
            <person name="Kirchrath L."/>
            <person name="Kleine K."/>
            <person name="Kordes E."/>
            <person name="Koetter P."/>
            <person name="Liebl S."/>
            <person name="Louis E.J."/>
            <person name="Manus V."/>
            <person name="Mewes H.-W."/>
            <person name="Miosga T."/>
            <person name="Obermaier B."/>
            <person name="Perea J."/>
            <person name="Pohl T.M."/>
            <person name="Portetelle D."/>
            <person name="Pujol A."/>
            <person name="Purnelle B."/>
            <person name="Ramezani Rad M."/>
            <person name="Rasmussen S.W."/>
            <person name="Rose M."/>
            <person name="Rossau R."/>
            <person name="Schaaff-Gerstenschlaeger I."/>
            <person name="Smits P.H.M."/>
            <person name="Scarcez T."/>
            <person name="Soriano N."/>
            <person name="To Van D."/>
            <person name="Tzermia M."/>
            <person name="Van Broekhoven A."/>
            <person name="Vandenbol M."/>
            <person name="Wedler H."/>
            <person name="von Wettstein D."/>
            <person name="Wambutt R."/>
            <person name="Zagulski M."/>
            <person name="Zollner A."/>
            <person name="Karpfinger-Hartl L."/>
        </authorList>
    </citation>
    <scope>NUCLEOTIDE SEQUENCE [LARGE SCALE GENOMIC DNA]</scope>
    <source>
        <strain>ATCC 204508 / S288c</strain>
    </source>
</reference>
<reference key="4">
    <citation type="journal article" date="2014" name="G3 (Bethesda)">
        <title>The reference genome sequence of Saccharomyces cerevisiae: Then and now.</title>
        <authorList>
            <person name="Engel S.R."/>
            <person name="Dietrich F.S."/>
            <person name="Fisk D.G."/>
            <person name="Binkley G."/>
            <person name="Balakrishnan R."/>
            <person name="Costanzo M.C."/>
            <person name="Dwight S.S."/>
            <person name="Hitz B.C."/>
            <person name="Karra K."/>
            <person name="Nash R.S."/>
            <person name="Weng S."/>
            <person name="Wong E.D."/>
            <person name="Lloyd P."/>
            <person name="Skrzypek M.S."/>
            <person name="Miyasato S.R."/>
            <person name="Simison M."/>
            <person name="Cherry J.M."/>
        </authorList>
    </citation>
    <scope>GENOME REANNOTATION</scope>
    <source>
        <strain>ATCC 204508 / S288c</strain>
    </source>
</reference>
<reference key="5">
    <citation type="journal article" date="1996" name="Microbiology">
        <title>SPR28, a sixth member of the septin gene family in Saccharomyces cerevisiae that is expressed specifically in sporulating cells.</title>
        <authorList>
            <person name="de Virgilio C."/>
            <person name="DeMarini D.J."/>
            <person name="Pringle J.R."/>
        </authorList>
    </citation>
    <scope>INTERACTION WITH SPR28</scope>
</reference>
<reference key="6">
    <citation type="journal article" date="1998" name="J. Cell Biol.">
        <title>Polymerization of purified yeast septins: evidence that organized filament arrays may not be required for septin function.</title>
        <authorList>
            <person name="Frazier J.A."/>
            <person name="Wong M.L."/>
            <person name="Longtine M.S."/>
            <person name="Pringle J.R."/>
            <person name="Mann M."/>
            <person name="Mitchison T.J."/>
            <person name="Field C."/>
        </authorList>
    </citation>
    <scope>IDENTIFICATION IN THE SEPTIN COMPLEX</scope>
</reference>
<reference key="7">
    <citation type="journal article" date="1999" name="J. Cell Biol.">
        <title>Cell cycle-regulated attachment of the ubiquitin-related protein SUMO to the yeast septins.</title>
        <authorList>
            <person name="Johnson E.S."/>
            <person name="Blobel G."/>
        </authorList>
    </citation>
    <scope>SUMOYLATION AT LYS-412</scope>
    <scope>MUTAGENESIS OF LYS-412</scope>
</reference>
<reference key="8">
    <citation type="journal article" date="2001" name="FEBS Lett.">
        <title>Kcc4 associates with septin proteins of Saccharomyces cerevisiae.</title>
        <authorList>
            <person name="Okuzaki D."/>
            <person name="Nojima H."/>
        </authorList>
    </citation>
    <scope>INTERACTION WITH KCC4</scope>
</reference>
<reference key="9">
    <citation type="journal article" date="2002" name="Mol. Biol. Cell">
        <title>Cell cycle-dependent assembly of a Gin4-septin complex.</title>
        <authorList>
            <person name="Mortensen E.M."/>
            <person name="McDonald H."/>
            <person name="Yates J. III"/>
            <person name="Kellogg D.R."/>
        </authorList>
    </citation>
    <scope>IDENTIFICATION IN THE GIN4 COMPLEX</scope>
    <scope>IDENTIFICATION BY MASS SPECTROMETRY</scope>
</reference>
<reference key="10">
    <citation type="journal article" date="2003" name="Mol. Cell. Biol.">
        <title>Molecular dissection of a yeast septin: distinct domains are required for septin interaction, localization, and function.</title>
        <authorList>
            <person name="Casamayor A."/>
            <person name="Snyder M."/>
        </authorList>
    </citation>
    <scope>FUNCTION</scope>
    <scope>DOMAIN</scope>
    <scope>INTERACTION WITH CDC3 AND BEM4</scope>
    <scope>MUTAGENESIS OF 12-ARG--HIS-16; GLY-29; GLY-32; GLY-34; ARG-35; ASN-40 AND GLY-230</scope>
</reference>
<reference key="11">
    <citation type="journal article" date="2003" name="Nature">
        <title>Global analysis of protein localization in budding yeast.</title>
        <authorList>
            <person name="Huh W.-K."/>
            <person name="Falvo J.V."/>
            <person name="Gerke L.C."/>
            <person name="Carroll A.S."/>
            <person name="Howson R.W."/>
            <person name="Weissman J.S."/>
            <person name="O'Shea E.K."/>
        </authorList>
    </citation>
    <scope>SUBCELLULAR LOCATION [LARGE SCALE ANALYSIS]</scope>
</reference>
<reference key="12">
    <citation type="journal article" date="2003" name="Nature">
        <title>Global analysis of protein expression in yeast.</title>
        <authorList>
            <person name="Ghaemmaghami S."/>
            <person name="Huh W.-K."/>
            <person name="Bower K."/>
            <person name="Howson R.W."/>
            <person name="Belle A."/>
            <person name="Dephoure N."/>
            <person name="O'Shea E.K."/>
            <person name="Weissman J.S."/>
        </authorList>
    </citation>
    <scope>LEVEL OF PROTEIN EXPRESSION [LARGE SCALE ANALYSIS]</scope>
</reference>
<reference key="13">
    <citation type="journal article" date="2004" name="Mol. Biol. Cell">
        <title>Protein-protein interactions governing septin heteropentamer assembly and septin filament organization in Saccharomyces cerevisiae.</title>
        <authorList>
            <person name="Versele M."/>
            <person name="Gullbrand B."/>
            <person name="Shulewitz M.J."/>
            <person name="Cid V.J."/>
            <person name="Bahmanyar S."/>
            <person name="Chen R.E."/>
            <person name="Barth P."/>
            <person name="Alber T."/>
            <person name="Thorner J."/>
        </authorList>
    </citation>
    <scope>SELF-ASSOCIATION</scope>
    <scope>ASSEMBLY OF THE SEPTIN FILAMENTS</scope>
</reference>
<reference key="14">
    <citation type="journal article" date="2005" name="Mol. Cell. Proteomics">
        <title>Quantitative phosphoproteomics applied to the yeast pheromone signaling pathway.</title>
        <authorList>
            <person name="Gruhler A."/>
            <person name="Olsen J.V."/>
            <person name="Mohammed S."/>
            <person name="Mortensen P."/>
            <person name="Faergeman N.J."/>
            <person name="Mann M."/>
            <person name="Jensen O.N."/>
        </authorList>
    </citation>
    <scope>ACETYLATION [LARGE SCALE ANALYSIS] AT SER-2</scope>
    <scope>PHOSPHORYLATION [LARGE SCALE ANALYSIS] AT SER-2</scope>
    <scope>CLEAVAGE OF INITIATOR METHIONINE [LARGE SCALE ANALYSIS]</scope>
    <scope>IDENTIFICATION BY MASS SPECTROMETRY [LARGE SCALE ANALYSIS]</scope>
    <source>
        <strain>YAL6B</strain>
    </source>
</reference>
<reference key="15">
    <citation type="journal article" date="2007" name="J. Proteome Res.">
        <title>Large-scale phosphorylation analysis of alpha-factor-arrested Saccharomyces cerevisiae.</title>
        <authorList>
            <person name="Li X."/>
            <person name="Gerber S.A."/>
            <person name="Rudner A.D."/>
            <person name="Beausoleil S.A."/>
            <person name="Haas W."/>
            <person name="Villen J."/>
            <person name="Elias J.E."/>
            <person name="Gygi S.P."/>
        </authorList>
    </citation>
    <scope>PHOSPHORYLATION [LARGE SCALE ANALYSIS] AT SER-305 AND THR-327</scope>
    <scope>IDENTIFICATION BY MASS SPECTROMETRY [LARGE SCALE ANALYSIS]</scope>
    <source>
        <strain>ADR376</strain>
    </source>
</reference>
<reference key="16">
    <citation type="journal article" date="2007" name="Proc. Natl. Acad. Sci. U.S.A.">
        <title>Analysis of phosphorylation sites on proteins from Saccharomyces cerevisiae by electron transfer dissociation (ETD) mass spectrometry.</title>
        <authorList>
            <person name="Chi A."/>
            <person name="Huttenhower C."/>
            <person name="Geer L.Y."/>
            <person name="Coon J.J."/>
            <person name="Syka J.E.P."/>
            <person name="Bai D.L."/>
            <person name="Shabanowitz J."/>
            <person name="Burke D.J."/>
            <person name="Troyanskaya O.G."/>
            <person name="Hunt D.F."/>
        </authorList>
    </citation>
    <scope>PHOSPHORYLATION [LARGE SCALE ANALYSIS] AT THR-327</scope>
    <scope>IDENTIFICATION BY MASS SPECTROMETRY [LARGE SCALE ANALYSIS]</scope>
</reference>
<reference key="17">
    <citation type="journal article" date="2008" name="Genetics">
        <title>A novel septin-associated protein, Syp1p, is required for normal cell cycle-dependent septin cytoskeleton dynamics in yeast.</title>
        <authorList>
            <person name="Qiu W."/>
            <person name="Neo S.P."/>
            <person name="Yu X."/>
            <person name="Cai M."/>
        </authorList>
    </citation>
    <scope>INTERACTION WITH SYP1</scope>
</reference>
<reference key="18">
    <citation type="journal article" date="2008" name="Mol. Cell. Proteomics">
        <title>A multidimensional chromatography technology for in-depth phosphoproteome analysis.</title>
        <authorList>
            <person name="Albuquerque C.P."/>
            <person name="Smolka M.B."/>
            <person name="Payne S.H."/>
            <person name="Bafna V."/>
            <person name="Eng J."/>
            <person name="Zhou H."/>
        </authorList>
    </citation>
    <scope>IDENTIFICATION BY MASS SPECTROMETRY [LARGE SCALE ANALYSIS]</scope>
</reference>
<reference key="19">
    <citation type="journal article" date="2012" name="Proc. Natl. Acad. Sci. U.S.A.">
        <title>N-terminal acetylome analyses and functional insights of the N-terminal acetyltransferase NatB.</title>
        <authorList>
            <person name="Van Damme P."/>
            <person name="Lasa M."/>
            <person name="Polevoda B."/>
            <person name="Gazquez C."/>
            <person name="Elosegui-Artola A."/>
            <person name="Kim D.S."/>
            <person name="De Juan-Pardo E."/>
            <person name="Demeyer K."/>
            <person name="Hole K."/>
            <person name="Larrea E."/>
            <person name="Timmerman E."/>
            <person name="Prieto J."/>
            <person name="Arnesen T."/>
            <person name="Sherman F."/>
            <person name="Gevaert K."/>
            <person name="Aldabe R."/>
        </authorList>
    </citation>
    <scope>ACETYLATION [LARGE SCALE ANALYSIS] AT SER-2</scope>
    <scope>CLEAVAGE OF INITIATOR METHIONINE [LARGE SCALE ANALYSIS]</scope>
    <scope>IDENTIFICATION BY MASS SPECTROMETRY [LARGE SCALE ANALYSIS]</scope>
</reference>
<reference key="20">
    <citation type="journal article" date="2015" name="Genetics">
        <title>The carboxy-terminal tails of septins Cdc11 and Shs1 recruit myosin-II binding factor Bni5 to the bud neck in Saccharomyces cerevisiae.</title>
        <authorList>
            <person name="Finnigan G.C."/>
            <person name="Booth E.A."/>
            <person name="Duvalyan A."/>
            <person name="Liao E.N."/>
            <person name="Thorner J."/>
        </authorList>
    </citation>
    <scope>FUNCTION</scope>
    <scope>DOMAIN</scope>
    <scope>SUBCELLULAR LOCATION</scope>
    <scope>INTERACTION WITH BNI5</scope>
</reference>
<reference evidence="16" key="21">
    <citation type="journal article" date="2016" name="J. Struct. Biol.">
        <title>Crystal structure of Cdc11, a septin subunit from Saccharomyces cerevisiae.</title>
        <authorList>
            <person name="Brausemann A."/>
            <person name="Gerhardt S."/>
            <person name="Schott A.K."/>
            <person name="Einsle O."/>
            <person name="Grosse-Berkenbusch A."/>
            <person name="Johnsson N."/>
            <person name="Gronemeyer T."/>
        </authorList>
    </citation>
    <scope>X-RAY CRYSTALLOGRAPHY (2.85 ANGSTROMS) OF 20-298</scope>
</reference>
<sequence length="415" mass="47649">MSGIIDASSALRKRKHLKRGITFTVMIVGQSGSGRSTFINTLCGQQVVDTSTTILLPTDTSTEIDLQLREETVELEDDEGVKIQLNIIDTPGFGDSLDNSPSFEIISDYIRHQYDEILLEESRVRRNPRFKDGRVHCCLYLINPTGHGLKEIDVEFIRQLGSLVNIIPVISKSDSLTRDELKLNKKLIMEDIDRWNLPIYNFPFDEDEISDEDYETNMYLRTLLPFAIIGSNEVYEMGGDVGTIRGRKYPWGILDVEDSSISDFVILRNALLISHLHDLKNYTHEILYERYRTEALSGESVAAESIRPNLTKLNGSSSSSTTTRRNTNPFKQSNNINNDVLNPASDMHGQSTGENNETYMTREEQIRLEEERLKAFEERVQQELLLKRQELLQREKELREIEARLEKEAKIKQEE</sequence>
<gene>
    <name evidence="15" type="primary">CDC11</name>
    <name type="synonym">PSL9</name>
    <name type="ordered locus">YJR076C</name>
    <name type="ORF">J1833</name>
</gene>
<dbReference type="EMBL" id="L16550">
    <property type="protein sequence ID" value="AAB50035.1"/>
    <property type="molecule type" value="Genomic_DNA"/>
</dbReference>
<dbReference type="EMBL" id="L47993">
    <property type="protein sequence ID" value="AAB39301.1"/>
    <property type="molecule type" value="Genomic_DNA"/>
</dbReference>
<dbReference type="EMBL" id="Z49576">
    <property type="protein sequence ID" value="CAA89604.1"/>
    <property type="molecule type" value="Genomic_DNA"/>
</dbReference>
<dbReference type="EMBL" id="BK006943">
    <property type="protein sequence ID" value="DAA08862.1"/>
    <property type="molecule type" value="Genomic_DNA"/>
</dbReference>
<dbReference type="PIR" id="S40911">
    <property type="entry name" value="S40911"/>
</dbReference>
<dbReference type="RefSeq" id="NP_012610.1">
    <property type="nucleotide sequence ID" value="NM_001181734.1"/>
</dbReference>
<dbReference type="PDB" id="5AR1">
    <property type="method" value="X-ray"/>
    <property type="resolution" value="2.85 A"/>
    <property type="chains" value="A=20-298"/>
</dbReference>
<dbReference type="PDBsum" id="5AR1"/>
<dbReference type="SMR" id="P32458"/>
<dbReference type="BioGRID" id="33832">
    <property type="interactions" value="1252"/>
</dbReference>
<dbReference type="ComplexPortal" id="CPX-1675">
    <property type="entry name" value="Septin complex"/>
</dbReference>
<dbReference type="ComplexPortal" id="CPX-1712">
    <property type="entry name" value="Gin4 serine/threonine kinase complex"/>
</dbReference>
<dbReference type="DIP" id="DIP-1656N"/>
<dbReference type="ELM" id="P32458"/>
<dbReference type="FunCoup" id="P32458">
    <property type="interactions" value="238"/>
</dbReference>
<dbReference type="IntAct" id="P32458">
    <property type="interactions" value="46"/>
</dbReference>
<dbReference type="MINT" id="P32458"/>
<dbReference type="STRING" id="4932.YJR076C"/>
<dbReference type="iPTMnet" id="P32458"/>
<dbReference type="PaxDb" id="4932-YJR076C"/>
<dbReference type="PeptideAtlas" id="P32458"/>
<dbReference type="EnsemblFungi" id="YJR076C_mRNA">
    <property type="protein sequence ID" value="YJR076C"/>
    <property type="gene ID" value="YJR076C"/>
</dbReference>
<dbReference type="GeneID" id="853539"/>
<dbReference type="KEGG" id="sce:YJR076C"/>
<dbReference type="AGR" id="SGD:S000003837"/>
<dbReference type="SGD" id="S000003837">
    <property type="gene designation" value="CDC11"/>
</dbReference>
<dbReference type="VEuPathDB" id="FungiDB:YJR076C"/>
<dbReference type="eggNOG" id="KOG2655">
    <property type="taxonomic scope" value="Eukaryota"/>
</dbReference>
<dbReference type="HOGENOM" id="CLU_017718_7_4_1"/>
<dbReference type="InParanoid" id="P32458"/>
<dbReference type="OMA" id="GYDSAMN"/>
<dbReference type="OrthoDB" id="416553at2759"/>
<dbReference type="BioCyc" id="YEAST:G3O-31706-MONOMER"/>
<dbReference type="BioGRID-ORCS" id="853539">
    <property type="hits" value="1 hit in 10 CRISPR screens"/>
</dbReference>
<dbReference type="PRO" id="PR:P32458"/>
<dbReference type="Proteomes" id="UP000002311">
    <property type="component" value="Chromosome X"/>
</dbReference>
<dbReference type="RNAct" id="P32458">
    <property type="molecule type" value="protein"/>
</dbReference>
<dbReference type="GO" id="GO:0005619">
    <property type="term" value="C:ascospore wall"/>
    <property type="evidence" value="ECO:0000314"/>
    <property type="project" value="SGD"/>
</dbReference>
<dbReference type="GO" id="GO:0032153">
    <property type="term" value="C:cell division site"/>
    <property type="evidence" value="ECO:0000318"/>
    <property type="project" value="GO_Central"/>
</dbReference>
<dbReference type="GO" id="GO:0005935">
    <property type="term" value="C:cellular bud neck"/>
    <property type="evidence" value="ECO:0007005"/>
    <property type="project" value="SGD"/>
</dbReference>
<dbReference type="GO" id="GO:0000144">
    <property type="term" value="C:cellular bud neck septin ring"/>
    <property type="evidence" value="ECO:0000314"/>
    <property type="project" value="SGD"/>
</dbReference>
<dbReference type="GO" id="GO:0005881">
    <property type="term" value="C:cytoplasmic microtubule"/>
    <property type="evidence" value="ECO:0000314"/>
    <property type="project" value="SGD"/>
</dbReference>
<dbReference type="GO" id="GO:0005829">
    <property type="term" value="C:cytosol"/>
    <property type="evidence" value="ECO:0000318"/>
    <property type="project" value="GO_Central"/>
</dbReference>
<dbReference type="GO" id="GO:1990317">
    <property type="term" value="C:Gin4 complex"/>
    <property type="evidence" value="ECO:0000353"/>
    <property type="project" value="ComplexPortal"/>
</dbReference>
<dbReference type="GO" id="GO:0001400">
    <property type="term" value="C:mating projection base"/>
    <property type="evidence" value="ECO:0000314"/>
    <property type="project" value="SGD"/>
</dbReference>
<dbReference type="GO" id="GO:0043332">
    <property type="term" value="C:mating projection tip"/>
    <property type="evidence" value="ECO:0007005"/>
    <property type="project" value="SGD"/>
</dbReference>
<dbReference type="GO" id="GO:0072687">
    <property type="term" value="C:meiotic spindle"/>
    <property type="evidence" value="ECO:0000314"/>
    <property type="project" value="SGD"/>
</dbReference>
<dbReference type="GO" id="GO:0015630">
    <property type="term" value="C:microtubule cytoskeleton"/>
    <property type="evidence" value="ECO:0000318"/>
    <property type="project" value="GO_Central"/>
</dbReference>
<dbReference type="GO" id="GO:0005628">
    <property type="term" value="C:prospore membrane"/>
    <property type="evidence" value="ECO:0000314"/>
    <property type="project" value="SGD"/>
</dbReference>
<dbReference type="GO" id="GO:0031105">
    <property type="term" value="C:septin complex"/>
    <property type="evidence" value="ECO:0000314"/>
    <property type="project" value="SGD"/>
</dbReference>
<dbReference type="GO" id="GO:0032160">
    <property type="term" value="C:septin filament array"/>
    <property type="evidence" value="ECO:0000314"/>
    <property type="project" value="SGD"/>
</dbReference>
<dbReference type="GO" id="GO:0005940">
    <property type="term" value="C:septin ring"/>
    <property type="evidence" value="ECO:0000318"/>
    <property type="project" value="GO_Central"/>
</dbReference>
<dbReference type="GO" id="GO:0005876">
    <property type="term" value="C:spindle microtubule"/>
    <property type="evidence" value="ECO:0000314"/>
    <property type="project" value="SGD"/>
</dbReference>
<dbReference type="GO" id="GO:0005525">
    <property type="term" value="F:GTP binding"/>
    <property type="evidence" value="ECO:0000314"/>
    <property type="project" value="SGD"/>
</dbReference>
<dbReference type="GO" id="GO:0003924">
    <property type="term" value="F:GTPase activity"/>
    <property type="evidence" value="ECO:0000318"/>
    <property type="project" value="GO_Central"/>
</dbReference>
<dbReference type="GO" id="GO:0042802">
    <property type="term" value="F:identical protein binding"/>
    <property type="evidence" value="ECO:0000353"/>
    <property type="project" value="IntAct"/>
</dbReference>
<dbReference type="GO" id="GO:0060090">
    <property type="term" value="F:molecular adaptor activity"/>
    <property type="evidence" value="ECO:0000318"/>
    <property type="project" value="GO_Central"/>
</dbReference>
<dbReference type="GO" id="GO:0070273">
    <property type="term" value="F:phosphatidylinositol-4-phosphate binding"/>
    <property type="evidence" value="ECO:0000314"/>
    <property type="project" value="SGD"/>
</dbReference>
<dbReference type="GO" id="GO:0010314">
    <property type="term" value="F:phosphatidylinositol-5-phosphate binding"/>
    <property type="evidence" value="ECO:0000314"/>
    <property type="project" value="SGD"/>
</dbReference>
<dbReference type="GO" id="GO:0005200">
    <property type="term" value="F:structural constituent of cytoskeleton"/>
    <property type="evidence" value="ECO:0000314"/>
    <property type="project" value="SGD"/>
</dbReference>
<dbReference type="GO" id="GO:0000915">
    <property type="term" value="P:actomyosin contractile ring assembly"/>
    <property type="evidence" value="ECO:0000318"/>
    <property type="project" value="GO_Central"/>
</dbReference>
<dbReference type="GO" id="GO:0032186">
    <property type="term" value="P:cellular bud neck septin ring organization"/>
    <property type="evidence" value="ECO:0000318"/>
    <property type="project" value="GO_Central"/>
</dbReference>
<dbReference type="GO" id="GO:0061640">
    <property type="term" value="P:cytoskeleton-dependent cytokinesis"/>
    <property type="evidence" value="ECO:0000318"/>
    <property type="project" value="GO_Central"/>
</dbReference>
<dbReference type="GO" id="GO:0000917">
    <property type="term" value="P:division septum assembly"/>
    <property type="evidence" value="ECO:0000318"/>
    <property type="project" value="GO_Central"/>
</dbReference>
<dbReference type="GO" id="GO:0000281">
    <property type="term" value="P:mitotic cytokinesis"/>
    <property type="evidence" value="ECO:0000315"/>
    <property type="project" value="SGD"/>
</dbReference>
<dbReference type="GO" id="GO:0097271">
    <property type="term" value="P:protein localization to bud neck"/>
    <property type="evidence" value="ECO:0000316"/>
    <property type="project" value="SGD"/>
</dbReference>
<dbReference type="GO" id="GO:0000921">
    <property type="term" value="P:septin ring assembly"/>
    <property type="evidence" value="ECO:0000303"/>
    <property type="project" value="ComplexPortal"/>
</dbReference>
<dbReference type="GO" id="GO:0000920">
    <property type="term" value="P:septum digestion after cytokinesis"/>
    <property type="evidence" value="ECO:0000303"/>
    <property type="project" value="ComplexPortal"/>
</dbReference>
<dbReference type="CDD" id="cd01850">
    <property type="entry name" value="CDC_Septin"/>
    <property type="match status" value="1"/>
</dbReference>
<dbReference type="FunFam" id="3.40.50.300:FF:001557">
    <property type="entry name" value="Septin homolog spn3"/>
    <property type="match status" value="1"/>
</dbReference>
<dbReference type="Gene3D" id="3.40.50.300">
    <property type="entry name" value="P-loop containing nucleotide triphosphate hydrolases"/>
    <property type="match status" value="1"/>
</dbReference>
<dbReference type="InterPro" id="IPR030379">
    <property type="entry name" value="G_SEPTIN_dom"/>
</dbReference>
<dbReference type="InterPro" id="IPR027417">
    <property type="entry name" value="P-loop_NTPase"/>
</dbReference>
<dbReference type="InterPro" id="IPR016491">
    <property type="entry name" value="Septin"/>
</dbReference>
<dbReference type="PANTHER" id="PTHR18884">
    <property type="entry name" value="SEPTIN"/>
    <property type="match status" value="1"/>
</dbReference>
<dbReference type="Pfam" id="PF00735">
    <property type="entry name" value="Septin"/>
    <property type="match status" value="1"/>
</dbReference>
<dbReference type="PIRSF" id="PIRSF006698">
    <property type="entry name" value="Septin"/>
    <property type="match status" value="1"/>
</dbReference>
<dbReference type="SUPFAM" id="SSF52540">
    <property type="entry name" value="P-loop containing nucleoside triphosphate hydrolases"/>
    <property type="match status" value="1"/>
</dbReference>
<dbReference type="PROSITE" id="PS51719">
    <property type="entry name" value="G_SEPTIN"/>
    <property type="match status" value="1"/>
</dbReference>
<comment type="function">
    <text evidence="8 12">Septins are GTPases involved in cytokinesis that assemble early in the cell cycle as a patch at the incipient bud site and form a ring approximate 15 minutes before bud emergence, which transforms into an hour-glass shaped collar of cortical filaments that spans both sides of the mother-bud neck (PubMed:12665577). This collar persists until just before cytokinesis, when it splits into two rings that occupy opposite sides of the neck (PubMed:12665577). The septins at the bud neck serve as a structural scaffold that recruits different components involved in diverse processes at specific stages during the cell cycle. Many proteins bind asymmetrically to the septin collar (PubMed:12665577). The septin assembly is regulated by protein kinases GIN4 and/or CLA4. May act by recruiting MYO1 and HOF1, a protein involved in septation, to the site of cleavage (PubMed:12665577). Septins are also involved in cell morphogenesis, bud site selection, chitin deposition, cell cycle regulation, cell compartmentalization and spore wall formation (PubMed:12665577). CDCd11 with SHS1 11 are involved in the recruitment of BNI5 and thereby ensure efficient localization at the bud neck of MYO1, the type II myosin of the actomyosin contractile ring (PubMed:25971666).</text>
</comment>
<comment type="subunit">
    <text evidence="6 7 11 12 13 14">Component of the septin complex which consists of CDC3, CDC10, CDC11, CDC12 and probably SHS1 and rearranges to a cortical collar of highly ordered filaments at the mother-bud-neck (PubMed:9813094). A complex formed by CDC3, CDC10, CDC11 and CDC12 is capable of forming long filaments in vitro and the components seem to be present in a 2:2:2:2 arrangement in vivo (PubMed:9813094). The filaments are proposed to be formed by the end-to-end polymerization of CDC3-CDC12-CDC11 complexes with CDC10 serving as a bridge to bundle the polymers into paired filaments (PubMed:9813094). Component of the GIN4 complex composed of at least BNI5, CDC3, CDC10, CDC11, CDC12, GIN4, NAP1 and SHS1 (PubMed:12058072). Self-associates. Interacts with BEM4, KCC4, SPR28 and SYP1 (PubMed:11165249, PubMed:18791237, PubMed:8885406). Interacts with BNI5 (PubMed:25971666).</text>
</comment>
<comment type="interaction">
    <interactant intactId="EBI-4178">
        <id>P32458</id>
    </interactant>
    <interactant intactId="EBI-4178">
        <id>P32458</id>
        <label>CDC11</label>
    </interactant>
    <organismsDiffer>false</organismsDiffer>
    <experiments>2</experiments>
</comment>
<comment type="interaction">
    <interactant intactId="EBI-4178">
        <id>P32458</id>
    </interactant>
    <interactant intactId="EBI-4182">
        <id>P32468</id>
        <label>CDC12</label>
    </interactant>
    <organismsDiffer>false</organismsDiffer>
    <experiments>12</experiments>
</comment>
<comment type="interaction">
    <interactant intactId="EBI-4178">
        <id>P32458</id>
    </interactant>
    <interactant intactId="EBI-7575">
        <id>P38785</id>
        <label>GIC1</label>
    </interactant>
    <organismsDiffer>false</organismsDiffer>
    <experiments>2</experiments>
</comment>
<comment type="interaction">
    <interactant intactId="EBI-4178">
        <id>P32458</id>
    </interactant>
    <interactant intactId="EBI-7585">
        <id>Q06648</id>
        <label>GIC2</label>
    </interactant>
    <organismsDiffer>false</organismsDiffer>
    <experiments>2</experiments>
</comment>
<comment type="interaction">
    <interactant intactId="EBI-4178">
        <id>P32458</id>
    </interactant>
    <interactant intactId="EBI-7595">
        <id>Q12263</id>
        <label>GIN4</label>
    </interactant>
    <organismsDiffer>false</organismsDiffer>
    <experiments>7</experiments>
</comment>
<comment type="interaction">
    <interactant intactId="EBI-4178">
        <id>P32458</id>
    </interactant>
    <interactant intactId="EBI-22083">
        <id>Q07657</id>
        <label>SHS1</label>
    </interactant>
    <organismsDiffer>false</organismsDiffer>
    <experiments>6</experiments>
</comment>
<comment type="subcellular location">
    <subcellularLocation>
        <location evidence="9">Membrane</location>
    </subcellularLocation>
    <subcellularLocation>
        <location evidence="9 12">Bud neck</location>
    </subcellularLocation>
    <text>Present at the bud neck during cell division. Interacts with phosphatidylinositol 4-phosphate and phosphatidylinositol 5-phosphate (PI(4)P and PI(5)P).</text>
</comment>
<comment type="domain">
    <text evidence="8">The coiled coil domain is required for the interaction with CDC3 and BEM4, but not for interaction with CDC12 or with itself.</text>
</comment>
<comment type="domain">
    <text evidence="8">The basic motif is essential for the association with PI(4)P and PI(5)P.</text>
</comment>
<comment type="domain">
    <text evidence="12">The C-terminal extension (CTE) that contains a coiled coil is important for the recruitment of BNI5 and subsequent localization at the bud neck of MYO1.</text>
</comment>
<comment type="PTM">
    <text evidence="5">Sumoylated during mitosis on the mother cell side of the bud neck. Sumoylation probably plays a central role in regulating septin ring disassembly during the cell cycle.</text>
</comment>
<comment type="miscellaneous">
    <text evidence="10">Present with 9280 molecules/cell in log phase SD medium.</text>
</comment>
<comment type="similarity">
    <text evidence="3">Belongs to the TRAFAC class TrmE-Era-EngA-EngB-Septin-like GTPase superfamily. Septin GTPase family.</text>
</comment>
<name>CDC11_YEAST</name>
<proteinExistence type="evidence at protein level"/>
<accession>P32458</accession>
<accession>D6VWP6</accession>